<sequence>MLYPTRFDVIVVGGGHAGTEAALAAARAGANTLLLTHNLDTLGAMSCNPSIGGIGKGHLVREVDALGGAMAAATDEAGIQFRILNASKGPAVRATRAQADRVLYKQAIRTRLENQPNLTIFAEACDDLIVEGDKVCGAVTQLGIRFMAEAVVLTAGTFLNGKIHVGLENYTGGRMGDPPSVSLASRLKELKLPQGRLKTGTPPRLDGKTIDFSVMEEQHSDDPLPVFSFLGNAAQHPKQLPCWITETNERTHDIIRSGLDRSPMYTGVIEGVGPRYCPSIEDKIHRFADKNQHNVFLEPEGLTTHEIYPNGVSTSLPFDIQLALVRSIRGMENCHILRPGYAIEYDFYDPRGLKDTLETKAIHGLFFAGQINGTTGYEEAAAQGLLAGINAVRYVRGQSGWCPKRNEAYLGVLVDDLITRGVSDPYRMFTSRAEYRLSLREDNADLRLTEQGRELGLVDDVRWTAFCQKRDAIAAEQERLKSTWVNPKITPADDCIRVLGKAIDHEYNLFELLRRPEVTYTSLLTLPGAGEAQTDPLVVEQLEISAKYQGYIDRQAEEVAKSSSYENTVLPSELDYSSVAGLSNEVRQKLAQHKPQTIGQASRIQGITPAAISLLLIHLKRHNLSQAA</sequence>
<protein>
    <recommendedName>
        <fullName evidence="1">tRNA uridine 5-carboxymethylaminomethyl modification enzyme MnmG</fullName>
    </recommendedName>
    <alternativeName>
        <fullName evidence="1">Glucose-inhibited division protein A</fullName>
    </alternativeName>
</protein>
<comment type="function">
    <text evidence="1">NAD-binding protein involved in the addition of a carboxymethylaminomethyl (cmnm) group at the wobble position (U34) of certain tRNAs, forming tRNA-cmnm(5)s(2)U34.</text>
</comment>
<comment type="cofactor">
    <cofactor evidence="1">
        <name>FAD</name>
        <dbReference type="ChEBI" id="CHEBI:57692"/>
    </cofactor>
</comment>
<comment type="subunit">
    <text evidence="1">Homodimer. Heterotetramer of two MnmE and two MnmG subunits.</text>
</comment>
<comment type="subcellular location">
    <subcellularLocation>
        <location evidence="1">Cytoplasm</location>
    </subcellularLocation>
</comment>
<comment type="similarity">
    <text evidence="1">Belongs to the MnmG family.</text>
</comment>
<name>MNMG_DECAR</name>
<dbReference type="EMBL" id="CP000089">
    <property type="protein sequence ID" value="AAZ48829.1"/>
    <property type="molecule type" value="Genomic_DNA"/>
</dbReference>
<dbReference type="SMR" id="Q478A2"/>
<dbReference type="STRING" id="159087.Daro_4103"/>
<dbReference type="KEGG" id="dar:Daro_4103"/>
<dbReference type="eggNOG" id="COG0445">
    <property type="taxonomic scope" value="Bacteria"/>
</dbReference>
<dbReference type="HOGENOM" id="CLU_007831_2_2_4"/>
<dbReference type="OrthoDB" id="9815560at2"/>
<dbReference type="GO" id="GO:0005829">
    <property type="term" value="C:cytosol"/>
    <property type="evidence" value="ECO:0007669"/>
    <property type="project" value="TreeGrafter"/>
</dbReference>
<dbReference type="GO" id="GO:0050660">
    <property type="term" value="F:flavin adenine dinucleotide binding"/>
    <property type="evidence" value="ECO:0007669"/>
    <property type="project" value="UniProtKB-UniRule"/>
</dbReference>
<dbReference type="GO" id="GO:0030488">
    <property type="term" value="P:tRNA methylation"/>
    <property type="evidence" value="ECO:0007669"/>
    <property type="project" value="TreeGrafter"/>
</dbReference>
<dbReference type="GO" id="GO:0002098">
    <property type="term" value="P:tRNA wobble uridine modification"/>
    <property type="evidence" value="ECO:0007669"/>
    <property type="project" value="InterPro"/>
</dbReference>
<dbReference type="FunFam" id="1.10.10.1800:FF:000001">
    <property type="entry name" value="tRNA uridine 5-carboxymethylaminomethyl modification enzyme MnmG"/>
    <property type="match status" value="1"/>
</dbReference>
<dbReference type="FunFam" id="1.10.150.570:FF:000001">
    <property type="entry name" value="tRNA uridine 5-carboxymethylaminomethyl modification enzyme MnmG"/>
    <property type="match status" value="1"/>
</dbReference>
<dbReference type="FunFam" id="3.50.50.60:FF:000002">
    <property type="entry name" value="tRNA uridine 5-carboxymethylaminomethyl modification enzyme MnmG"/>
    <property type="match status" value="1"/>
</dbReference>
<dbReference type="FunFam" id="3.50.50.60:FF:000010">
    <property type="entry name" value="tRNA uridine 5-carboxymethylaminomethyl modification enzyme MnmG"/>
    <property type="match status" value="1"/>
</dbReference>
<dbReference type="Gene3D" id="3.50.50.60">
    <property type="entry name" value="FAD/NAD(P)-binding domain"/>
    <property type="match status" value="2"/>
</dbReference>
<dbReference type="Gene3D" id="1.10.150.570">
    <property type="entry name" value="GidA associated domain, C-terminal subdomain"/>
    <property type="match status" value="1"/>
</dbReference>
<dbReference type="Gene3D" id="1.10.10.1800">
    <property type="entry name" value="tRNA uridine 5-carboxymethylaminomethyl modification enzyme MnmG/GidA"/>
    <property type="match status" value="1"/>
</dbReference>
<dbReference type="HAMAP" id="MF_00129">
    <property type="entry name" value="MnmG_GidA"/>
    <property type="match status" value="1"/>
</dbReference>
<dbReference type="InterPro" id="IPR036188">
    <property type="entry name" value="FAD/NAD-bd_sf"/>
</dbReference>
<dbReference type="InterPro" id="IPR049312">
    <property type="entry name" value="GIDA_C_N"/>
</dbReference>
<dbReference type="InterPro" id="IPR004416">
    <property type="entry name" value="MnmG"/>
</dbReference>
<dbReference type="InterPro" id="IPR002218">
    <property type="entry name" value="MnmG-rel"/>
</dbReference>
<dbReference type="InterPro" id="IPR020595">
    <property type="entry name" value="MnmG-rel_CS"/>
</dbReference>
<dbReference type="InterPro" id="IPR026904">
    <property type="entry name" value="MnmG_C"/>
</dbReference>
<dbReference type="InterPro" id="IPR047001">
    <property type="entry name" value="MnmG_C_subdom"/>
</dbReference>
<dbReference type="InterPro" id="IPR044920">
    <property type="entry name" value="MnmG_C_subdom_sf"/>
</dbReference>
<dbReference type="InterPro" id="IPR040131">
    <property type="entry name" value="MnmG_N"/>
</dbReference>
<dbReference type="NCBIfam" id="TIGR00136">
    <property type="entry name" value="mnmG_gidA"/>
    <property type="match status" value="1"/>
</dbReference>
<dbReference type="PANTHER" id="PTHR11806">
    <property type="entry name" value="GLUCOSE INHIBITED DIVISION PROTEIN A"/>
    <property type="match status" value="1"/>
</dbReference>
<dbReference type="PANTHER" id="PTHR11806:SF0">
    <property type="entry name" value="PROTEIN MTO1 HOMOLOG, MITOCHONDRIAL"/>
    <property type="match status" value="1"/>
</dbReference>
<dbReference type="Pfam" id="PF01134">
    <property type="entry name" value="GIDA"/>
    <property type="match status" value="1"/>
</dbReference>
<dbReference type="Pfam" id="PF21680">
    <property type="entry name" value="GIDA_C_1st"/>
    <property type="match status" value="1"/>
</dbReference>
<dbReference type="Pfam" id="PF13932">
    <property type="entry name" value="SAM_GIDA_C"/>
    <property type="match status" value="1"/>
</dbReference>
<dbReference type="SMART" id="SM01228">
    <property type="entry name" value="GIDA_assoc_3"/>
    <property type="match status" value="1"/>
</dbReference>
<dbReference type="SUPFAM" id="SSF51905">
    <property type="entry name" value="FAD/NAD(P)-binding domain"/>
    <property type="match status" value="1"/>
</dbReference>
<dbReference type="PROSITE" id="PS01280">
    <property type="entry name" value="GIDA_1"/>
    <property type="match status" value="1"/>
</dbReference>
<dbReference type="PROSITE" id="PS01281">
    <property type="entry name" value="GIDA_2"/>
    <property type="match status" value="1"/>
</dbReference>
<proteinExistence type="inferred from homology"/>
<organism>
    <name type="scientific">Dechloromonas aromatica (strain RCB)</name>
    <dbReference type="NCBI Taxonomy" id="159087"/>
    <lineage>
        <taxon>Bacteria</taxon>
        <taxon>Pseudomonadati</taxon>
        <taxon>Pseudomonadota</taxon>
        <taxon>Betaproteobacteria</taxon>
        <taxon>Rhodocyclales</taxon>
        <taxon>Azonexaceae</taxon>
        <taxon>Dechloromonas</taxon>
    </lineage>
</organism>
<keyword id="KW-0963">Cytoplasm</keyword>
<keyword id="KW-0274">FAD</keyword>
<keyword id="KW-0285">Flavoprotein</keyword>
<keyword id="KW-0520">NAD</keyword>
<keyword id="KW-0819">tRNA processing</keyword>
<gene>
    <name evidence="1" type="primary">mnmG</name>
    <name evidence="1" type="synonym">gidA</name>
    <name type="ordered locus">Daro_4103</name>
</gene>
<evidence type="ECO:0000255" key="1">
    <source>
        <dbReference type="HAMAP-Rule" id="MF_00129"/>
    </source>
</evidence>
<feature type="chain" id="PRO_1000016589" description="tRNA uridine 5-carboxymethylaminomethyl modification enzyme MnmG">
    <location>
        <begin position="1"/>
        <end position="628"/>
    </location>
</feature>
<feature type="binding site" evidence="1">
    <location>
        <begin position="13"/>
        <end position="18"/>
    </location>
    <ligand>
        <name>FAD</name>
        <dbReference type="ChEBI" id="CHEBI:57692"/>
    </ligand>
</feature>
<feature type="binding site" evidence="1">
    <location>
        <begin position="273"/>
        <end position="287"/>
    </location>
    <ligand>
        <name>NAD(+)</name>
        <dbReference type="ChEBI" id="CHEBI:57540"/>
    </ligand>
</feature>
<accession>Q478A2</accession>
<reference key="1">
    <citation type="journal article" date="2009" name="BMC Genomics">
        <title>Metabolic analysis of the soil microbe Dechloromonas aromatica str. RCB: indications of a surprisingly complex life-style and cryptic anaerobic pathways for aromatic degradation.</title>
        <authorList>
            <person name="Salinero K.K."/>
            <person name="Keller K."/>
            <person name="Feil W.S."/>
            <person name="Feil H."/>
            <person name="Trong S."/>
            <person name="Di Bartolo G."/>
            <person name="Lapidus A."/>
        </authorList>
    </citation>
    <scope>NUCLEOTIDE SEQUENCE [LARGE SCALE GENOMIC DNA]</scope>
    <source>
        <strain>RCB</strain>
    </source>
</reference>